<sequence length="828" mass="95198">MPSALAIFTCRPNSHPFQERHVYLDEPIKIGRSVARCRPAQNNATFDCKVLSRNHALVWFDHKTGKFYLQDTKSSNGTFINSQRLSRGSEESPPCEILSGDIIQFGVDVTENTRKVTHGCIVSTIKLFLPDGMEARLRSDVIHAPLPSPVDKVAANTPSMYSQELFQLSQYLQEALHREQMLEQKLATLQRLLAITQEASDTSWQALIDEDRLLSRLEVMGNQLQACSKNQTEDSLRKELIALQEDKHNYETTAKESLRRVLQEKIEVVRKLSEVERSLSNTEDECTHLKEMNERTQEELRELANKYNGAVNEIKDLSDKLKVAEGKQEEIQQKGQAEKKELQHKIDEMEEKEQELQAKIEALQADNDFTNERLTALQVRLEHLQEKTLKECSSLEHLLSKSGGDCTFIHQFIECQKKLIVEGHLTKAVEETKLSKENQTRAKESDFSDTLSPSKEKSSDDTTDAQMDEQDLNEPLAKVSLLKDDLQGAQSEIEAKQEIQHLRKELIEAQELARTSKQKCFELQALLEEERKAYRNQVEESTKQIQVLQAQLQRLHIDTENLREEKDSEITSTRDELLSARDEILLLHQAAAKVASERDTDIASLQEELKKVRAELERWRKAASEYEKEITSLQNSFQLRCQQCEDQQREEATRLQGELEKLRKEWNALETECHSLKRENVLLSSELQRQEKELHNSQKQSLELTSDLSILQMSRKELENQVGSLKEQHLRDSADLKTLLSKAENQAKDVQKEYEKTQTVLSELKLKFEMTEQEKQSITDELKQCKNNLKLLREKGNNKPWPWMPMLAALVAVTAIVLYVPGLARASP</sequence>
<evidence type="ECO:0000250" key="1"/>
<evidence type="ECO:0000250" key="2">
    <source>
        <dbReference type="UniProtKB" id="P0C219"/>
    </source>
</evidence>
<evidence type="ECO:0000250" key="3">
    <source>
        <dbReference type="UniProtKB" id="Q3URD3"/>
    </source>
</evidence>
<evidence type="ECO:0000255" key="4"/>
<evidence type="ECO:0000255" key="5">
    <source>
        <dbReference type="PROSITE-ProRule" id="PRU00086"/>
    </source>
</evidence>
<evidence type="ECO:0000256" key="6">
    <source>
        <dbReference type="SAM" id="MobiDB-lite"/>
    </source>
</evidence>
<evidence type="ECO:0000269" key="7">
    <source>
    </source>
</evidence>
<evidence type="ECO:0000269" key="8">
    <source>
    </source>
</evidence>
<evidence type="ECO:0000269" key="9">
    <source>
    </source>
</evidence>
<evidence type="ECO:0000269" key="10">
    <source>
    </source>
</evidence>
<evidence type="ECO:0000303" key="11">
    <source>
    </source>
</evidence>
<evidence type="ECO:0000303" key="12">
    <source>
    </source>
</evidence>
<evidence type="ECO:0000303" key="13">
    <source>
    </source>
</evidence>
<evidence type="ECO:0000303" key="14">
    <source>
    </source>
</evidence>
<evidence type="ECO:0000303" key="15">
    <source>
    </source>
</evidence>
<evidence type="ECO:0000303" key="16">
    <source>
    </source>
</evidence>
<evidence type="ECO:0000303" key="17">
    <source>
    </source>
</evidence>
<evidence type="ECO:0000305" key="18"/>
<evidence type="ECO:0000312" key="19">
    <source>
        <dbReference type="HGNC" id="HGNC:16643"/>
    </source>
</evidence>
<evidence type="ECO:0007744" key="20">
    <source>
        <dbReference type="PDB" id="6AKM"/>
    </source>
</evidence>
<evidence type="ECO:0007744" key="21">
    <source>
        <dbReference type="PDB" id="6AR0"/>
    </source>
</evidence>
<evidence type="ECO:0007744" key="22">
    <source>
        <dbReference type="PDB" id="6AR2"/>
    </source>
</evidence>
<evidence type="ECO:0007744" key="23">
    <source>
    </source>
</evidence>
<evidence type="ECO:0007744" key="24">
    <source>
    </source>
</evidence>
<evidence type="ECO:0007744" key="25">
    <source>
    </source>
</evidence>
<evidence type="ECO:0007829" key="26">
    <source>
        <dbReference type="PDB" id="6AKM"/>
    </source>
</evidence>
<evidence type="ECO:0007829" key="27">
    <source>
        <dbReference type="PDB" id="6AR0"/>
    </source>
</evidence>
<evidence type="ECO:0007829" key="28">
    <source>
        <dbReference type="PDB" id="6AR2"/>
    </source>
</evidence>
<dbReference type="EMBL" id="AF304450">
    <property type="protein sequence ID" value="AAG41949.1"/>
    <property type="molecule type" value="mRNA"/>
</dbReference>
<dbReference type="EMBL" id="AF100750">
    <property type="protein sequence ID" value="AAD43014.1"/>
    <property type="molecule type" value="mRNA"/>
</dbReference>
<dbReference type="EMBL" id="AY358410">
    <property type="protein sequence ID" value="AAQ88776.1"/>
    <property type="status" value="ALT_INIT"/>
    <property type="molecule type" value="mRNA"/>
</dbReference>
<dbReference type="EMBL" id="AK124200">
    <property type="protein sequence ID" value="BAC85803.1"/>
    <property type="molecule type" value="mRNA"/>
</dbReference>
<dbReference type="EMBL" id="AL834538">
    <property type="protein sequence ID" value="CAD39194.1"/>
    <property type="molecule type" value="mRNA"/>
</dbReference>
<dbReference type="EMBL" id="CR627321">
    <property type="protein sequence ID" value="CAH10369.1"/>
    <property type="status" value="ALT_TERM"/>
    <property type="molecule type" value="mRNA"/>
</dbReference>
<dbReference type="EMBL" id="BC114627">
    <property type="protein sequence ID" value="AAI14628.1"/>
    <property type="molecule type" value="mRNA"/>
</dbReference>
<dbReference type="EMBL" id="BC115701">
    <property type="protein sequence ID" value="AAI15702.1"/>
    <property type="molecule type" value="mRNA"/>
</dbReference>
<dbReference type="EMBL" id="AB046821">
    <property type="protein sequence ID" value="BAB13427.1"/>
    <property type="molecule type" value="mRNA"/>
</dbReference>
<dbReference type="CCDS" id="CCDS33774.1">
    <molecule id="Q14BN4-3"/>
</dbReference>
<dbReference type="CCDS" id="CCDS77757.1">
    <molecule id="Q14BN4-1"/>
</dbReference>
<dbReference type="CCDS" id="CCDS77758.1">
    <molecule id="Q14BN4-2"/>
</dbReference>
<dbReference type="CCDS" id="CCDS93301.1">
    <molecule id="Q14BN4-5"/>
</dbReference>
<dbReference type="RefSeq" id="NP_001291349.1">
    <molecule id="Q14BN4-1"/>
    <property type="nucleotide sequence ID" value="NM_001304420.3"/>
</dbReference>
<dbReference type="RefSeq" id="NP_001291350.1">
    <molecule id="Q14BN4-2"/>
    <property type="nucleotide sequence ID" value="NM_001304421.2"/>
</dbReference>
<dbReference type="RefSeq" id="NP_001298107.1">
    <molecule id="Q14BN4-5"/>
    <property type="nucleotide sequence ID" value="NM_001311178.2"/>
</dbReference>
<dbReference type="RefSeq" id="NP_001298108.1">
    <molecule id="Q14BN4-8"/>
    <property type="nucleotide sequence ID" value="NM_001311179.2"/>
</dbReference>
<dbReference type="RefSeq" id="NP_001364486.1">
    <molecule id="Q14BN4-2"/>
    <property type="nucleotide sequence ID" value="NM_001377557.1"/>
</dbReference>
<dbReference type="RefSeq" id="NP_009090.2">
    <molecule id="Q14BN4-3"/>
    <property type="nucleotide sequence ID" value="NM_007159.5"/>
</dbReference>
<dbReference type="RefSeq" id="XP_005265518.1">
    <property type="nucleotide sequence ID" value="XM_005265461.3"/>
</dbReference>
<dbReference type="RefSeq" id="XP_005265523.1">
    <property type="nucleotide sequence ID" value="XM_005265466.3"/>
</dbReference>
<dbReference type="RefSeq" id="XP_005265528.1">
    <property type="nucleotide sequence ID" value="XM_005265471.3"/>
</dbReference>
<dbReference type="RefSeq" id="XP_016862659.1">
    <property type="nucleotide sequence ID" value="XM_017007170.1"/>
</dbReference>
<dbReference type="PDB" id="6AKM">
    <property type="method" value="X-ray"/>
    <property type="resolution" value="2.30 A"/>
    <property type="chains" value="B=167-226"/>
</dbReference>
<dbReference type="PDB" id="6AR0">
    <property type="method" value="X-ray"/>
    <property type="resolution" value="1.08 A"/>
    <property type="chains" value="A=1-140"/>
</dbReference>
<dbReference type="PDB" id="6AR2">
    <property type="method" value="X-ray"/>
    <property type="resolution" value="1.55 A"/>
    <property type="chains" value="A/B=1-140"/>
</dbReference>
<dbReference type="PDBsum" id="6AKM"/>
<dbReference type="PDBsum" id="6AR0"/>
<dbReference type="PDBsum" id="6AR2"/>
<dbReference type="SMR" id="Q14BN4"/>
<dbReference type="BioGRID" id="113620">
    <property type="interactions" value="133"/>
</dbReference>
<dbReference type="FunCoup" id="Q14BN4">
    <property type="interactions" value="1923"/>
</dbReference>
<dbReference type="IntAct" id="Q14BN4">
    <property type="interactions" value="97"/>
</dbReference>
<dbReference type="MINT" id="Q14BN4"/>
<dbReference type="STRING" id="9606.ENSP00000499241"/>
<dbReference type="GlyGen" id="Q14BN4">
    <property type="glycosylation" value="1 site, 1 O-linked glycan (1 site)"/>
</dbReference>
<dbReference type="iPTMnet" id="Q14BN4"/>
<dbReference type="PhosphoSitePlus" id="Q14BN4"/>
<dbReference type="SwissPalm" id="Q14BN4"/>
<dbReference type="BioMuta" id="SLMAP"/>
<dbReference type="DMDM" id="118597508"/>
<dbReference type="jPOST" id="Q14BN4"/>
<dbReference type="MassIVE" id="Q14BN4"/>
<dbReference type="PaxDb" id="9606-ENSP00000295951"/>
<dbReference type="PeptideAtlas" id="Q14BN4"/>
<dbReference type="ProteomicsDB" id="60298">
    <molecule id="Q14BN4-1"/>
</dbReference>
<dbReference type="ProteomicsDB" id="60299">
    <molecule id="Q14BN4-2"/>
</dbReference>
<dbReference type="ProteomicsDB" id="60300">
    <molecule id="Q14BN4-3"/>
</dbReference>
<dbReference type="ProteomicsDB" id="60301">
    <molecule id="Q14BN4-4"/>
</dbReference>
<dbReference type="ProteomicsDB" id="60302">
    <molecule id="Q14BN4-5"/>
</dbReference>
<dbReference type="ProteomicsDB" id="60303">
    <molecule id="Q14BN4-6"/>
</dbReference>
<dbReference type="ProteomicsDB" id="60304">
    <molecule id="Q14BN4-7"/>
</dbReference>
<dbReference type="ProteomicsDB" id="60305">
    <molecule id="Q14BN4-8"/>
</dbReference>
<dbReference type="Pumba" id="Q14BN4"/>
<dbReference type="Antibodypedia" id="1193">
    <property type="antibodies" value="75 antibodies from 19 providers"/>
</dbReference>
<dbReference type="DNASU" id="7871"/>
<dbReference type="Ensembl" id="ENST00000295951.7">
    <molecule id="Q14BN4-3"/>
    <property type="protein sequence ID" value="ENSP00000295951.3"/>
    <property type="gene ID" value="ENSG00000163681.17"/>
</dbReference>
<dbReference type="Ensembl" id="ENST00000295952.7">
    <molecule id="Q14BN4-3"/>
    <property type="protein sequence ID" value="ENSP00000295952.3"/>
    <property type="gene ID" value="ENSG00000163681.17"/>
</dbReference>
<dbReference type="Ensembl" id="ENST00000383718.7">
    <molecule id="Q14BN4-6"/>
    <property type="protein sequence ID" value="ENSP00000373224.3"/>
    <property type="gene ID" value="ENSG00000163681.17"/>
</dbReference>
<dbReference type="Ensembl" id="ENST00000449503.6">
    <molecule id="Q14BN4-2"/>
    <property type="protein sequence ID" value="ENSP00000412945.2"/>
    <property type="gene ID" value="ENSG00000163681.17"/>
</dbReference>
<dbReference type="Ensembl" id="ENST00000494088.6">
    <molecule id="Q14BN4-5"/>
    <property type="protein sequence ID" value="ENSP00000418218.2"/>
    <property type="gene ID" value="ENSG00000163681.17"/>
</dbReference>
<dbReference type="Ensembl" id="ENST00000659705.1">
    <molecule id="Q14BN4-1"/>
    <property type="protein sequence ID" value="ENSP00000499241.1"/>
    <property type="gene ID" value="ENSG00000163681.17"/>
</dbReference>
<dbReference type="GeneID" id="7871"/>
<dbReference type="KEGG" id="hsa:7871"/>
<dbReference type="UCSC" id="uc003djc.2">
    <molecule id="Q14BN4-1"/>
    <property type="organism name" value="human"/>
</dbReference>
<dbReference type="AGR" id="HGNC:16643"/>
<dbReference type="CTD" id="7871"/>
<dbReference type="DisGeNET" id="7871"/>
<dbReference type="GeneCards" id="SLMAP"/>
<dbReference type="GeneReviews" id="SLMAP"/>
<dbReference type="HGNC" id="HGNC:16643">
    <property type="gene designation" value="SLMAP"/>
</dbReference>
<dbReference type="HPA" id="ENSG00000163681">
    <property type="expression patterns" value="Low tissue specificity"/>
</dbReference>
<dbReference type="MalaCards" id="SLMAP"/>
<dbReference type="MIM" id="602701">
    <property type="type" value="gene"/>
</dbReference>
<dbReference type="neXtProt" id="NX_Q14BN4"/>
<dbReference type="OpenTargets" id="ENSG00000163681"/>
<dbReference type="Orphanet" id="130">
    <property type="disease" value="Brugada syndrome"/>
</dbReference>
<dbReference type="PharmGKB" id="PA38179"/>
<dbReference type="VEuPathDB" id="HostDB:ENSG00000163681"/>
<dbReference type="eggNOG" id="KOG3872">
    <property type="taxonomic scope" value="Eukaryota"/>
</dbReference>
<dbReference type="GeneTree" id="ENSGT00940000157660"/>
<dbReference type="HOGENOM" id="CLU_041551_0_1_1"/>
<dbReference type="InParanoid" id="Q14BN4"/>
<dbReference type="OrthoDB" id="687730at2759"/>
<dbReference type="PAN-GO" id="Q14BN4">
    <property type="GO annotations" value="3 GO annotations based on evolutionary models"/>
</dbReference>
<dbReference type="PhylomeDB" id="Q14BN4"/>
<dbReference type="TreeFam" id="TF318787"/>
<dbReference type="PathwayCommons" id="Q14BN4"/>
<dbReference type="SignaLink" id="Q14BN4"/>
<dbReference type="BioGRID-ORCS" id="7871">
    <property type="hits" value="64 hits in 1156 CRISPR screens"/>
</dbReference>
<dbReference type="ChiTaRS" id="SLMAP">
    <property type="organism name" value="human"/>
</dbReference>
<dbReference type="GeneWiki" id="SLMAP"/>
<dbReference type="GenomeRNAi" id="7871"/>
<dbReference type="Pharos" id="Q14BN4">
    <property type="development level" value="Tbio"/>
</dbReference>
<dbReference type="PRO" id="PR:Q14BN4"/>
<dbReference type="Proteomes" id="UP000005640">
    <property type="component" value="Chromosome 3"/>
</dbReference>
<dbReference type="RNAct" id="Q14BN4">
    <property type="molecule type" value="protein"/>
</dbReference>
<dbReference type="Bgee" id="ENSG00000163681">
    <property type="expression patterns" value="Expressed in saphenous vein and 191 other cell types or tissues"/>
</dbReference>
<dbReference type="ExpressionAtlas" id="Q14BN4">
    <property type="expression patterns" value="baseline and differential"/>
</dbReference>
<dbReference type="GO" id="GO:0005813">
    <property type="term" value="C:centrosome"/>
    <property type="evidence" value="ECO:0007669"/>
    <property type="project" value="UniProtKB-SubCell"/>
</dbReference>
<dbReference type="GO" id="GO:0005737">
    <property type="term" value="C:cytoplasm"/>
    <property type="evidence" value="ECO:0000314"/>
    <property type="project" value="UniProt"/>
</dbReference>
<dbReference type="GO" id="GO:0005789">
    <property type="term" value="C:endoplasmic reticulum membrane"/>
    <property type="evidence" value="ECO:0007669"/>
    <property type="project" value="UniProtKB-SubCell"/>
</dbReference>
<dbReference type="GO" id="GO:0090443">
    <property type="term" value="C:FAR/SIN/STRIPAK complex"/>
    <property type="evidence" value="ECO:0000314"/>
    <property type="project" value="UniProtKB"/>
</dbReference>
<dbReference type="GO" id="GO:0031430">
    <property type="term" value="C:M band"/>
    <property type="evidence" value="ECO:0007669"/>
    <property type="project" value="UniProtKB-SubCell"/>
</dbReference>
<dbReference type="GO" id="GO:0031966">
    <property type="term" value="C:mitochondrial membrane"/>
    <property type="evidence" value="ECO:0007669"/>
    <property type="project" value="UniProtKB-SubCell"/>
</dbReference>
<dbReference type="GO" id="GO:0005886">
    <property type="term" value="C:plasma membrane"/>
    <property type="evidence" value="ECO:0000304"/>
    <property type="project" value="ProtInc"/>
</dbReference>
<dbReference type="GO" id="GO:0042383">
    <property type="term" value="C:sarcolemma"/>
    <property type="evidence" value="ECO:0007669"/>
    <property type="project" value="UniProtKB-SubCell"/>
</dbReference>
<dbReference type="GO" id="GO:0005790">
    <property type="term" value="C:smooth endoplasmic reticulum"/>
    <property type="evidence" value="ECO:0000304"/>
    <property type="project" value="ProtInc"/>
</dbReference>
<dbReference type="GO" id="GO:0030018">
    <property type="term" value="C:Z disc"/>
    <property type="evidence" value="ECO:0007669"/>
    <property type="project" value="UniProtKB-SubCell"/>
</dbReference>
<dbReference type="GO" id="GO:0030674">
    <property type="term" value="F:protein-macromolecule adaptor activity"/>
    <property type="evidence" value="ECO:0000314"/>
    <property type="project" value="UniProtKB"/>
</dbReference>
<dbReference type="GO" id="GO:0006936">
    <property type="term" value="P:muscle contraction"/>
    <property type="evidence" value="ECO:0000304"/>
    <property type="project" value="ProtInc"/>
</dbReference>
<dbReference type="GO" id="GO:0035331">
    <property type="term" value="P:negative regulation of hippo signaling"/>
    <property type="evidence" value="ECO:0000314"/>
    <property type="project" value="UniProtKB"/>
</dbReference>
<dbReference type="GO" id="GO:0072659">
    <property type="term" value="P:protein localization to plasma membrane"/>
    <property type="evidence" value="ECO:0000315"/>
    <property type="project" value="BHF-UCL"/>
</dbReference>
<dbReference type="GO" id="GO:1900825">
    <property type="term" value="P:regulation of membrane depolarization during cardiac muscle cell action potential"/>
    <property type="evidence" value="ECO:0000315"/>
    <property type="project" value="BHF-UCL"/>
</dbReference>
<dbReference type="GO" id="GO:1902305">
    <property type="term" value="P:regulation of sodium ion transmembrane transport"/>
    <property type="evidence" value="ECO:0000315"/>
    <property type="project" value="BHF-UCL"/>
</dbReference>
<dbReference type="CDD" id="cd21911">
    <property type="entry name" value="CC1_SLMAP"/>
    <property type="match status" value="1"/>
</dbReference>
<dbReference type="CDD" id="cd22679">
    <property type="entry name" value="FHA_SLMAP"/>
    <property type="match status" value="1"/>
</dbReference>
<dbReference type="FunFam" id="2.60.200.20:FF:000003">
    <property type="entry name" value="sarcolemmal membrane-associated protein isoform X2"/>
    <property type="match status" value="1"/>
</dbReference>
<dbReference type="Gene3D" id="1.10.287.1490">
    <property type="match status" value="1"/>
</dbReference>
<dbReference type="Gene3D" id="2.60.200.20">
    <property type="match status" value="1"/>
</dbReference>
<dbReference type="InterPro" id="IPR051176">
    <property type="entry name" value="Cent_Immune-Sig_Mod"/>
</dbReference>
<dbReference type="InterPro" id="IPR000253">
    <property type="entry name" value="FHA_dom"/>
</dbReference>
<dbReference type="InterPro" id="IPR008984">
    <property type="entry name" value="SMAD_FHA_dom_sf"/>
</dbReference>
<dbReference type="PANTHER" id="PTHR15715">
    <property type="entry name" value="CENTROSOMAL PROTEIN OF 170 KDA"/>
    <property type="match status" value="1"/>
</dbReference>
<dbReference type="PANTHER" id="PTHR15715:SF22">
    <property type="entry name" value="SARCOLEMMAL MEMBRANE-ASSOCIATED PROTEIN"/>
    <property type="match status" value="1"/>
</dbReference>
<dbReference type="Pfam" id="PF00498">
    <property type="entry name" value="FHA"/>
    <property type="match status" value="1"/>
</dbReference>
<dbReference type="SMART" id="SM00240">
    <property type="entry name" value="FHA"/>
    <property type="match status" value="1"/>
</dbReference>
<dbReference type="SUPFAM" id="SSF49879">
    <property type="entry name" value="SMAD/FHA domain"/>
    <property type="match status" value="1"/>
</dbReference>
<dbReference type="PROSITE" id="PS50006">
    <property type="entry name" value="FHA_DOMAIN"/>
    <property type="match status" value="1"/>
</dbReference>
<organism>
    <name type="scientific">Homo sapiens</name>
    <name type="common">Human</name>
    <dbReference type="NCBI Taxonomy" id="9606"/>
    <lineage>
        <taxon>Eukaryota</taxon>
        <taxon>Metazoa</taxon>
        <taxon>Chordata</taxon>
        <taxon>Craniata</taxon>
        <taxon>Vertebrata</taxon>
        <taxon>Euteleostomi</taxon>
        <taxon>Mammalia</taxon>
        <taxon>Eutheria</taxon>
        <taxon>Euarchontoglires</taxon>
        <taxon>Primates</taxon>
        <taxon>Haplorrhini</taxon>
        <taxon>Catarrhini</taxon>
        <taxon>Hominidae</taxon>
        <taxon>Homo</taxon>
    </lineage>
</organism>
<comment type="function">
    <text evidence="3 9 10">Associates with the striatin-interacting phosphatase and kinase (STRIPAK) core complex, forming the extended (SIKE1:SLMAP)STRIPAK complex (PubMed:29063833, PubMed:30622739). The (SIKE1:SLMAP)STRIPAK complex dephosphorylates STK3 leading to the inhibition of Hippo signaling and the control of cell growth (PubMed:29063833, PubMed:30622739). May play a role during myoblast fusion (By similarity).</text>
</comment>
<comment type="subunit">
    <text evidence="3 9 10">Homodimer. Interacts with myosin (By similarity). Interacts with SIKE1 and both associate with the STRIPAK core complex composed of PP2A catalytic and scaffolding subunits, the striatins (PP2A regulatory subunits), the striatin-associated proteins MOB4, STRIP1 and STRIP2, PDCD10 and members of the STE20 kinases, such as STK24 and STK26 (PubMed:29063833, PubMed:30622739). Interacts (via FHA domain) with STK3 (when phosphorylated); the interaction associates STK3 with the STRIPAK complex (PubMed:29063833).</text>
</comment>
<comment type="interaction">
    <interactant intactId="EBI-1043216">
        <id>Q14BN4</id>
    </interactant>
    <interactant intactId="EBI-992580">
        <id>Q13188</id>
        <label>STK3</label>
    </interactant>
    <organismsDiffer>false</organismsDiffer>
    <experiments>7</experiments>
</comment>
<comment type="interaction">
    <interactant intactId="EBI-1043216">
        <id>Q14BN4</id>
    </interactant>
    <interactant intactId="EBI-367376">
        <id>Q13043</id>
        <label>STK4</label>
    </interactant>
    <organismsDiffer>false</organismsDiffer>
    <experiments>8</experiments>
</comment>
<comment type="subcellular location">
    <subcellularLocation>
        <location evidence="2">Cell membrane</location>
        <location evidence="2">Sarcolemma</location>
        <topology evidence="2">Single-pass type IV membrane protein</topology>
    </subcellularLocation>
    <subcellularLocation>
        <location evidence="3">Cytoplasm</location>
        <location evidence="3">Myofibril</location>
        <location evidence="3">Sarcomere</location>
        <location evidence="3">M line</location>
    </subcellularLocation>
    <subcellularLocation>
        <location evidence="3">Cytoplasm</location>
        <location evidence="3">Myofibril</location>
        <location evidence="3">Sarcomere</location>
        <location evidence="3">Z line</location>
    </subcellularLocation>
    <subcellularLocation>
        <location evidence="3">Cytoplasm</location>
        <location evidence="3">Cytoskeleton</location>
        <location evidence="3">Microtubule organizing center</location>
        <location evidence="3">Centrosome</location>
    </subcellularLocation>
    <text evidence="2 3">Membrane-associated. Distributed in the transverse tubules and near the junctional sarcoplasmic reticulum (By similarity). Detected along the Z- and M-lines in cardiomyocytes (By similarity).</text>
</comment>
<comment type="subcellular location">
    <molecule>Isoform 1</molecule>
    <subcellularLocation>
        <location evidence="8">Endoplasmic reticulum membrane</location>
        <topology evidence="8">Single-pass type IV membrane protein</topology>
    </subcellularLocation>
    <subcellularLocation>
        <location evidence="8">Mitochondrion membrane</location>
        <topology evidence="8">Single-pass type IV membrane protein</topology>
    </subcellularLocation>
</comment>
<comment type="subcellular location">
    <molecule>Isoform 2</molecule>
    <subcellularLocation>
        <location evidence="8">Endoplasmic reticulum membrane</location>
        <topology evidence="8">Single-pass type IV membrane protein</topology>
    </subcellularLocation>
    <subcellularLocation>
        <location evidence="8">Mitochondrion membrane</location>
        <topology evidence="8">Single-pass type IV membrane protein</topology>
    </subcellularLocation>
</comment>
<comment type="subcellular location">
    <molecule>Isoform 3</molecule>
    <subcellularLocation>
        <location evidence="8">Endoplasmic reticulum membrane</location>
        <topology evidence="8">Single-pass type IV membrane protein</topology>
    </subcellularLocation>
    <subcellularLocation>
        <location evidence="8">Mitochondrion membrane</location>
        <topology evidence="8">Single-pass type IV membrane protein</topology>
    </subcellularLocation>
</comment>
<comment type="subcellular location">
    <molecule>Isoform 4</molecule>
    <subcellularLocation>
        <location evidence="8">Endoplasmic reticulum membrane</location>
        <topology evidence="8">Single-pass type IV membrane protein</topology>
    </subcellularLocation>
    <subcellularLocation>
        <location evidence="8">Mitochondrion membrane</location>
        <topology evidence="8">Single-pass type IV membrane protein</topology>
    </subcellularLocation>
</comment>
<comment type="subcellular location">
    <molecule>Isoform 5</molecule>
    <subcellularLocation>
        <location evidence="8">Endoplasmic reticulum membrane</location>
        <topology evidence="8">Single-pass type IV membrane protein</topology>
    </subcellularLocation>
    <text evidence="8">Do not localize at the mitochondrial membrane.</text>
</comment>
<comment type="alternative products">
    <event type="alternative splicing"/>
    <isoform>
        <id>Q14BN4-1</id>
        <name>1</name>
        <sequence type="displayed"/>
    </isoform>
    <isoform>
        <id>Q14BN4-2</id>
        <name>2</name>
        <sequence type="described" ref="VSP_021502"/>
    </isoform>
    <isoform>
        <id>Q14BN4-3</id>
        <name>3</name>
        <sequence type="described" ref="VSP_021503"/>
    </isoform>
    <isoform>
        <id>Q14BN4-4</id>
        <name>4</name>
        <sequence type="described" ref="VSP_021500 VSP_021501 VSP_021512"/>
    </isoform>
    <isoform>
        <id>Q14BN4-5</id>
        <name>5</name>
        <sequence type="described" ref="VSP_021499 VSP_021513"/>
    </isoform>
    <isoform>
        <id>Q14BN4-6</id>
        <name>6</name>
        <sequence type="described" ref="VSP_021505 VSP_021508 VSP_021509"/>
    </isoform>
    <isoform>
        <id>Q14BN4-7</id>
        <name>7</name>
        <sequence type="described" ref="VSP_021504 VSP_021506"/>
    </isoform>
    <isoform>
        <id>Q14BN4-8</id>
        <name>8</name>
        <sequence type="described" ref="VSP_021499 VSP_021507 VSP_021510 VSP_021511"/>
    </isoform>
</comment>
<comment type="domain">
    <text evidence="9">Alternative spliced transmembrane domains determine subcellular targeting. Isoforms 1, 2, 3 and 4 are targeted to endoplasmic reticulum membrane as well as mitochondrion membrane. Isoform 5 is not targeted to mitochondrion membrane but to endoplasmic reticulum membrane.</text>
</comment>
<comment type="miscellaneous">
    <molecule>Isoform 3</molecule>
    <text evidence="18">Incomplete sequence.</text>
</comment>
<comment type="similarity">
    <text evidence="18">Belongs to the SLMAP family.</text>
</comment>
<comment type="sequence caution" evidence="18">
    <conflict type="erroneous initiation">
        <sequence resource="EMBL-CDS" id="AAQ88776"/>
    </conflict>
    <text>Truncated N-terminus.</text>
</comment>
<comment type="sequence caution" evidence="18">
    <conflict type="erroneous termination">
        <sequence resource="EMBL-CDS" id="CAH10369"/>
    </conflict>
    <text>Truncated C-terminus.</text>
</comment>
<accession>Q14BN4</accession>
<accession>Q14C95</accession>
<accession>Q6AI54</accession>
<accession>Q6UXC9</accession>
<accession>Q6ZVQ8</accession>
<accession>Q8NCW9</accession>
<accession>Q9H297</accession>
<accession>Q9HCH1</accession>
<accession>Q9Y681</accession>
<proteinExistence type="evidence at protein level"/>
<feature type="chain" id="PRO_0000259662" description="Sarcolemmal membrane-associated protein">
    <location>
        <begin position="1"/>
        <end position="828"/>
    </location>
</feature>
<feature type="topological domain" description="Cytoplasmic" evidence="4">
    <location>
        <begin position="1"/>
        <end position="802"/>
    </location>
</feature>
<feature type="transmembrane region" description="Helical; Anchor for type IV membrane protein" evidence="4">
    <location>
        <begin position="803"/>
        <end position="823"/>
    </location>
</feature>
<feature type="topological domain" description="Extracellular" evidence="4">
    <location>
        <begin position="824"/>
        <end position="828"/>
    </location>
</feature>
<feature type="domain" description="FHA" evidence="5">
    <location>
        <begin position="28"/>
        <end position="85"/>
    </location>
</feature>
<feature type="region of interest" description="Necessary for targeting to centrosomes" evidence="1">
    <location>
        <begin position="1"/>
        <end position="163"/>
    </location>
</feature>
<feature type="region of interest" description="Disordered" evidence="6">
    <location>
        <begin position="433"/>
        <end position="467"/>
    </location>
</feature>
<feature type="coiled-coil region" evidence="4">
    <location>
        <begin position="167"/>
        <end position="202"/>
    </location>
</feature>
<feature type="coiled-coil region" evidence="4">
    <location>
        <begin position="230"/>
        <end position="388"/>
    </location>
</feature>
<feature type="coiled-coil region" evidence="4">
    <location>
        <begin position="477"/>
        <end position="799"/>
    </location>
</feature>
<feature type="compositionally biased region" description="Basic and acidic residues" evidence="6">
    <location>
        <begin position="433"/>
        <end position="446"/>
    </location>
</feature>
<feature type="modified residue" description="Phosphoserine" evidence="25">
    <location>
        <position position="148"/>
    </location>
</feature>
<feature type="modified residue" description="Phosphoserine" evidence="2">
    <location>
        <position position="448"/>
    </location>
</feature>
<feature type="modified residue" description="Phosphoserine" evidence="23 24 25">
    <location>
        <position position="452"/>
    </location>
</feature>
<feature type="splice variant" id="VSP_021499" description="In isoform 5 and isoform 8." evidence="11 17">
    <location>
        <begin position="1"/>
        <end position="466"/>
    </location>
</feature>
<feature type="splice variant" id="VSP_021500" description="In isoform 4." evidence="13">
    <location>
        <begin position="1"/>
        <end position="348"/>
    </location>
</feature>
<feature type="splice variant" id="VSP_021501" description="In isoform 4." evidence="13">
    <location>
        <begin position="379"/>
        <end position="436"/>
    </location>
</feature>
<feature type="splice variant" id="VSP_021502" description="In isoform 2." evidence="16">
    <original>VRLEHLQEKTLKECSSLEHLLSKSGGDCTFIHQFIECQK</original>
    <variation>E</variation>
    <location>
        <begin position="379"/>
        <end position="417"/>
    </location>
</feature>
<feature type="splice variant" id="VSP_021503" description="In isoform 3." evidence="12">
    <location>
        <begin position="379"/>
        <end position="395"/>
    </location>
</feature>
<feature type="splice variant" id="VSP_021504" description="In isoform 7." evidence="14">
    <original>EHLLSKSGGDCTFIHQFIECQKKLIVEGHLTKA</original>
    <variation>ADRRRASNQSGRRNKAFKRFVFCFSMFFDSSFG</variation>
    <location>
        <begin position="396"/>
        <end position="428"/>
    </location>
</feature>
<feature type="splice variant" id="VSP_021505" description="In isoform 6." evidence="15">
    <original>EHLLSKSGGDCTFIHQFIECQK</original>
    <variation>GIQVDDFLPKINGSTEKE</variation>
    <location>
        <begin position="396"/>
        <end position="417"/>
    </location>
</feature>
<feature type="splice variant" id="VSP_021506" description="In isoform 7." evidence="14">
    <location>
        <begin position="429"/>
        <end position="828"/>
    </location>
</feature>
<feature type="splice variant" id="VSP_021507" description="In isoform 8." evidence="17">
    <location>
        <begin position="484"/>
        <end position="524"/>
    </location>
</feature>
<feature type="splice variant" id="VSP_021508" description="In isoform 6." evidence="15">
    <original>DDLQGAQSEIEAKQEIQHLRKELIEAQ</original>
    <variation>GTLTCFYDIVNQGIKSPFAIKSVLDIM</variation>
    <location>
        <begin position="484"/>
        <end position="510"/>
    </location>
</feature>
<feature type="splice variant" id="VSP_021509" description="In isoform 6." evidence="15">
    <location>
        <begin position="511"/>
        <end position="828"/>
    </location>
</feature>
<feature type="splice variant" id="VSP_021510" description="In isoform 8." evidence="17">
    <original>YEKTQTVLSELKLKFEMTEQEKQSI</original>
    <variation>VKRKDIMSPIMVGLKAKSKSDIHAS</variation>
    <location>
        <begin position="754"/>
        <end position="778"/>
    </location>
</feature>
<feature type="splice variant" id="VSP_021511" description="In isoform 8." evidence="17">
    <location>
        <begin position="779"/>
        <end position="828"/>
    </location>
</feature>
<feature type="splice variant" id="VSP_021512" description="In isoform 4." evidence="13">
    <original>N</original>
    <variation>NPSILQPVPARIHRPIPGFPDMVIRSIVERK</variation>
    <location>
        <position position="798"/>
    </location>
</feature>
<feature type="splice variant" id="VSP_021513" description="In isoform 5." evidence="11">
    <original>KPWPWMPMLAALVAVTAIVLYVPGLARASP</original>
    <variation>PSILQPVPAVFIGLFLAFLFWCFGPLW</variation>
    <location>
        <begin position="799"/>
        <end position="828"/>
    </location>
</feature>
<feature type="mutagenesis site" description="Loss of interaction with SIKE1." evidence="10">
    <original>L</original>
    <variation>D</variation>
    <location>
        <position position="182"/>
    </location>
</feature>
<feature type="mutagenesis site" description="Loss of interaction with SIKE1." evidence="10">
    <original>L</original>
    <variation>D</variation>
    <location>
        <position position="186"/>
    </location>
</feature>
<feature type="mutagenesis site" description="Loss of interaction with SIKE1." evidence="10">
    <original>L</original>
    <variation>D</variation>
    <location>
        <position position="189"/>
    </location>
</feature>
<feature type="mutagenesis site" description="Loss of interaction with SIKE1." evidence="10">
    <original>L</original>
    <variation>D</variation>
    <location>
        <position position="193"/>
    </location>
</feature>
<feature type="mutagenesis site" description="No effect on location to mitochondrion membrane; when associated with L-825." evidence="8">
    <original>K</original>
    <variation>L</variation>
    <location>
        <position position="799"/>
    </location>
</feature>
<feature type="mutagenesis site" description="Loss of mitochondrion membrane location." evidence="8">
    <original>AALVAVTA</original>
    <variation>LLLVAVLL</variation>
    <location>
        <begin position="808"/>
        <end position="815"/>
    </location>
</feature>
<feature type="mutagenesis site" description="Loss of mitochondrion membrane location." evidence="8">
    <original>AA</original>
    <variation>LL</variation>
    <location>
        <begin position="808"/>
        <end position="809"/>
    </location>
</feature>
<feature type="mutagenesis site" description="No effect on location to mitochondrion membrane; when associated with K-799." evidence="8">
    <original>R</original>
    <variation>L</variation>
    <location>
        <position position="825"/>
    </location>
</feature>
<feature type="sequence conflict" description="In Ref. 1; AAG41949." evidence="18" ref="1">
    <original>I</original>
    <variation>T</variation>
    <location>
        <position position="493"/>
    </location>
</feature>
<feature type="sequence conflict" description="In Ref. 1; AAG41949." evidence="18" ref="1">
    <original>T</original>
    <variation>A</variation>
    <location>
        <position position="515"/>
    </location>
</feature>
<feature type="sequence conflict" description="In Ref. 2; AAD43014." evidence="18" ref="2">
    <original>A</original>
    <variation>Q</variation>
    <location>
        <position position="812"/>
    </location>
</feature>
<feature type="strand" evidence="27">
    <location>
        <begin position="5"/>
        <end position="10"/>
    </location>
</feature>
<feature type="strand" evidence="27">
    <location>
        <begin position="20"/>
        <end position="23"/>
    </location>
</feature>
<feature type="strand" evidence="27">
    <location>
        <begin position="28"/>
        <end position="32"/>
    </location>
</feature>
<feature type="strand" evidence="27">
    <location>
        <begin position="43"/>
        <end position="46"/>
    </location>
</feature>
<feature type="strand" evidence="27">
    <location>
        <begin position="56"/>
        <end position="60"/>
    </location>
</feature>
<feature type="turn" evidence="27">
    <location>
        <begin position="62"/>
        <end position="64"/>
    </location>
</feature>
<feature type="strand" evidence="27">
    <location>
        <begin position="67"/>
        <end position="73"/>
    </location>
</feature>
<feature type="strand" evidence="27">
    <location>
        <begin position="78"/>
        <end position="80"/>
    </location>
</feature>
<feature type="strand" evidence="27">
    <location>
        <begin position="95"/>
        <end position="97"/>
    </location>
</feature>
<feature type="strand" evidence="27">
    <location>
        <begin position="102"/>
        <end position="106"/>
    </location>
</feature>
<feature type="strand" evidence="28">
    <location>
        <begin position="109"/>
        <end position="111"/>
    </location>
</feature>
<feature type="strand" evidence="27">
    <location>
        <begin position="112"/>
        <end position="115"/>
    </location>
</feature>
<feature type="strand" evidence="28">
    <location>
        <begin position="116"/>
        <end position="118"/>
    </location>
</feature>
<feature type="strand" evidence="27">
    <location>
        <begin position="121"/>
        <end position="128"/>
    </location>
</feature>
<feature type="helix" evidence="26">
    <location>
        <begin position="167"/>
        <end position="199"/>
    </location>
</feature>
<feature type="helix" evidence="26">
    <location>
        <begin position="201"/>
        <end position="206"/>
    </location>
</feature>
<feature type="transmembrane region" description="Helical; Anchor for type IV membrane protein" evidence="7">
    <location sequence="Q14BN4-5">
        <begin position="339"/>
        <end position="359"/>
    </location>
</feature>
<gene>
    <name evidence="19" type="primary">SLMAP</name>
    <name type="synonym">KIAA1601</name>
    <name type="synonym">SLAP</name>
    <name type="ORF">UNQ1847/PRO3577</name>
</gene>
<protein>
    <recommendedName>
        <fullName evidence="18">Sarcolemmal membrane-associated protein</fullName>
        <shortName>Sarcolemmal-associated protein</shortName>
    </recommendedName>
</protein>
<name>SLMAP_HUMAN</name>
<reference key="1">
    <citation type="journal article" date="2000" name="J. Biol. Chem.">
        <title>Alternative splicing, expression, and genomic structure of the 3' region of the gene encoding the sarcolemmal-associated proteins (SLAPs) defines a novel class of coiled-coil tail-anchored membrane proteins.</title>
        <authorList>
            <person name="Wielowieyski P.A."/>
            <person name="Sevinc S."/>
            <person name="Guzzo R."/>
            <person name="Salih M."/>
            <person name="Wigle J.T."/>
            <person name="Tuana B.S."/>
        </authorList>
    </citation>
    <scope>NUCLEOTIDE SEQUENCE [MRNA] (ISOFORM 5)</scope>
    <scope>ALTERNATIVE SPLICING</scope>
    <source>
        <tissue>Heart</tissue>
    </source>
</reference>
<reference key="2">
    <citation type="journal article" date="2000" name="Genome Res.">
        <title>Cloning and functional analysis of cDNAs with open reading frames for 300 previously undefined genes expressed in CD34+ hematopoietic stem/progenitor cells.</title>
        <authorList>
            <person name="Zhang Q.-H."/>
            <person name="Ye M."/>
            <person name="Wu X.-Y."/>
            <person name="Ren S.-X."/>
            <person name="Zhao M."/>
            <person name="Zhao C.-J."/>
            <person name="Fu G."/>
            <person name="Shen Y."/>
            <person name="Fan H.-Y."/>
            <person name="Lu G."/>
            <person name="Zhong M."/>
            <person name="Xu X.-R."/>
            <person name="Han Z.-G."/>
            <person name="Zhang J.-W."/>
            <person name="Tao J."/>
            <person name="Huang Q.-H."/>
            <person name="Zhou J."/>
            <person name="Hu G.-X."/>
            <person name="Gu J."/>
            <person name="Chen S.-J."/>
            <person name="Chen Z."/>
        </authorList>
    </citation>
    <scope>NUCLEOTIDE SEQUENCE [LARGE SCALE MRNA] (ISOFORM 4)</scope>
    <source>
        <tissue>Umbilical cord blood</tissue>
    </source>
</reference>
<reference key="3">
    <citation type="journal article" date="2003" name="Genome Res.">
        <title>The secreted protein discovery initiative (SPDI), a large-scale effort to identify novel human secreted and transmembrane proteins: a bioinformatics assessment.</title>
        <authorList>
            <person name="Clark H.F."/>
            <person name="Gurney A.L."/>
            <person name="Abaya E."/>
            <person name="Baker K."/>
            <person name="Baldwin D.T."/>
            <person name="Brush J."/>
            <person name="Chen J."/>
            <person name="Chow B."/>
            <person name="Chui C."/>
            <person name="Crowley C."/>
            <person name="Currell B."/>
            <person name="Deuel B."/>
            <person name="Dowd P."/>
            <person name="Eaton D."/>
            <person name="Foster J.S."/>
            <person name="Grimaldi C."/>
            <person name="Gu Q."/>
            <person name="Hass P.E."/>
            <person name="Heldens S."/>
            <person name="Huang A."/>
            <person name="Kim H.S."/>
            <person name="Klimowski L."/>
            <person name="Jin Y."/>
            <person name="Johnson S."/>
            <person name="Lee J."/>
            <person name="Lewis L."/>
            <person name="Liao D."/>
            <person name="Mark M.R."/>
            <person name="Robbie E."/>
            <person name="Sanchez C."/>
            <person name="Schoenfeld J."/>
            <person name="Seshagiri S."/>
            <person name="Simmons L."/>
            <person name="Singh J."/>
            <person name="Smith V."/>
            <person name="Stinson J."/>
            <person name="Vagts A."/>
            <person name="Vandlen R.L."/>
            <person name="Watanabe C."/>
            <person name="Wieand D."/>
            <person name="Woods K."/>
            <person name="Xie M.-H."/>
            <person name="Yansura D.G."/>
            <person name="Yi S."/>
            <person name="Yu G."/>
            <person name="Yuan J."/>
            <person name="Zhang M."/>
            <person name="Zhang Z."/>
            <person name="Goddard A.D."/>
            <person name="Wood W.I."/>
            <person name="Godowski P.J."/>
            <person name="Gray A.M."/>
        </authorList>
    </citation>
    <scope>NUCLEOTIDE SEQUENCE [LARGE SCALE MRNA] (ISOFORM 7)</scope>
</reference>
<reference key="4">
    <citation type="journal article" date="2004" name="Nat. Genet.">
        <title>Complete sequencing and characterization of 21,243 full-length human cDNAs.</title>
        <authorList>
            <person name="Ota T."/>
            <person name="Suzuki Y."/>
            <person name="Nishikawa T."/>
            <person name="Otsuki T."/>
            <person name="Sugiyama T."/>
            <person name="Irie R."/>
            <person name="Wakamatsu A."/>
            <person name="Hayashi K."/>
            <person name="Sato H."/>
            <person name="Nagai K."/>
            <person name="Kimura K."/>
            <person name="Makita H."/>
            <person name="Sekine M."/>
            <person name="Obayashi M."/>
            <person name="Nishi T."/>
            <person name="Shibahara T."/>
            <person name="Tanaka T."/>
            <person name="Ishii S."/>
            <person name="Yamamoto J."/>
            <person name="Saito K."/>
            <person name="Kawai Y."/>
            <person name="Isono Y."/>
            <person name="Nakamura Y."/>
            <person name="Nagahari K."/>
            <person name="Murakami K."/>
            <person name="Yasuda T."/>
            <person name="Iwayanagi T."/>
            <person name="Wagatsuma M."/>
            <person name="Shiratori A."/>
            <person name="Sudo H."/>
            <person name="Hosoiri T."/>
            <person name="Kaku Y."/>
            <person name="Kodaira H."/>
            <person name="Kondo H."/>
            <person name="Sugawara M."/>
            <person name="Takahashi M."/>
            <person name="Kanda K."/>
            <person name="Yokoi T."/>
            <person name="Furuya T."/>
            <person name="Kikkawa E."/>
            <person name="Omura Y."/>
            <person name="Abe K."/>
            <person name="Kamihara K."/>
            <person name="Katsuta N."/>
            <person name="Sato K."/>
            <person name="Tanikawa M."/>
            <person name="Yamazaki M."/>
            <person name="Ninomiya K."/>
            <person name="Ishibashi T."/>
            <person name="Yamashita H."/>
            <person name="Murakawa K."/>
            <person name="Fujimori K."/>
            <person name="Tanai H."/>
            <person name="Kimata M."/>
            <person name="Watanabe M."/>
            <person name="Hiraoka S."/>
            <person name="Chiba Y."/>
            <person name="Ishida S."/>
            <person name="Ono Y."/>
            <person name="Takiguchi S."/>
            <person name="Watanabe S."/>
            <person name="Yosida M."/>
            <person name="Hotuta T."/>
            <person name="Kusano J."/>
            <person name="Kanehori K."/>
            <person name="Takahashi-Fujii A."/>
            <person name="Hara H."/>
            <person name="Tanase T.-O."/>
            <person name="Nomura Y."/>
            <person name="Togiya S."/>
            <person name="Komai F."/>
            <person name="Hara R."/>
            <person name="Takeuchi K."/>
            <person name="Arita M."/>
            <person name="Imose N."/>
            <person name="Musashino K."/>
            <person name="Yuuki H."/>
            <person name="Oshima A."/>
            <person name="Sasaki N."/>
            <person name="Aotsuka S."/>
            <person name="Yoshikawa Y."/>
            <person name="Matsunawa H."/>
            <person name="Ichihara T."/>
            <person name="Shiohata N."/>
            <person name="Sano S."/>
            <person name="Moriya S."/>
            <person name="Momiyama H."/>
            <person name="Satoh N."/>
            <person name="Takami S."/>
            <person name="Terashima Y."/>
            <person name="Suzuki O."/>
            <person name="Nakagawa S."/>
            <person name="Senoh A."/>
            <person name="Mizoguchi H."/>
            <person name="Goto Y."/>
            <person name="Shimizu F."/>
            <person name="Wakebe H."/>
            <person name="Hishigaki H."/>
            <person name="Watanabe T."/>
            <person name="Sugiyama A."/>
            <person name="Takemoto M."/>
            <person name="Kawakami B."/>
            <person name="Yamazaki M."/>
            <person name="Watanabe K."/>
            <person name="Kumagai A."/>
            <person name="Itakura S."/>
            <person name="Fukuzumi Y."/>
            <person name="Fujimori Y."/>
            <person name="Komiyama M."/>
            <person name="Tashiro H."/>
            <person name="Tanigami A."/>
            <person name="Fujiwara T."/>
            <person name="Ono T."/>
            <person name="Yamada K."/>
            <person name="Fujii Y."/>
            <person name="Ozaki K."/>
            <person name="Hirao M."/>
            <person name="Ohmori Y."/>
            <person name="Kawabata A."/>
            <person name="Hikiji T."/>
            <person name="Kobatake N."/>
            <person name="Inagaki H."/>
            <person name="Ikema Y."/>
            <person name="Okamoto S."/>
            <person name="Okitani R."/>
            <person name="Kawakami T."/>
            <person name="Noguchi S."/>
            <person name="Itoh T."/>
            <person name="Shigeta K."/>
            <person name="Senba T."/>
            <person name="Matsumura K."/>
            <person name="Nakajima Y."/>
            <person name="Mizuno T."/>
            <person name="Morinaga M."/>
            <person name="Sasaki M."/>
            <person name="Togashi T."/>
            <person name="Oyama M."/>
            <person name="Hata H."/>
            <person name="Watanabe M."/>
            <person name="Komatsu T."/>
            <person name="Mizushima-Sugano J."/>
            <person name="Satoh T."/>
            <person name="Shirai Y."/>
            <person name="Takahashi Y."/>
            <person name="Nakagawa K."/>
            <person name="Okumura K."/>
            <person name="Nagase T."/>
            <person name="Nomura N."/>
            <person name="Kikuchi H."/>
            <person name="Masuho Y."/>
            <person name="Yamashita R."/>
            <person name="Nakai K."/>
            <person name="Yada T."/>
            <person name="Nakamura Y."/>
            <person name="Ohara O."/>
            <person name="Isogai T."/>
            <person name="Sugano S."/>
        </authorList>
    </citation>
    <scope>NUCLEOTIDE SEQUENCE [LARGE SCALE MRNA] (ISOFORM 6)</scope>
    <source>
        <tissue>Thymus</tissue>
    </source>
</reference>
<reference key="5">
    <citation type="journal article" date="2007" name="BMC Genomics">
        <title>The full-ORF clone resource of the German cDNA consortium.</title>
        <authorList>
            <person name="Bechtel S."/>
            <person name="Rosenfelder H."/>
            <person name="Duda A."/>
            <person name="Schmidt C.P."/>
            <person name="Ernst U."/>
            <person name="Wellenreuther R."/>
            <person name="Mehrle A."/>
            <person name="Schuster C."/>
            <person name="Bahr A."/>
            <person name="Bloecker H."/>
            <person name="Heubner D."/>
            <person name="Hoerlein A."/>
            <person name="Michel G."/>
            <person name="Wedler H."/>
            <person name="Koehrer K."/>
            <person name="Ottenwaelder B."/>
            <person name="Poustka A."/>
            <person name="Wiemann S."/>
            <person name="Schupp I."/>
        </authorList>
    </citation>
    <scope>NUCLEOTIDE SEQUENCE [LARGE SCALE MRNA] (ISOFORM 8)</scope>
    <scope>NUCLEOTIDE SEQUENCE [LARGE SCALE MRNA] OF 528-828</scope>
    <source>
        <tissue>Fetal liver</tissue>
        <tissue>Uterus</tissue>
    </source>
</reference>
<reference key="6">
    <citation type="journal article" date="2004" name="Genome Res.">
        <title>The status, quality, and expansion of the NIH full-length cDNA project: the Mammalian Gene Collection (MGC).</title>
        <authorList>
            <consortium name="The MGC Project Team"/>
        </authorList>
    </citation>
    <scope>NUCLEOTIDE SEQUENCE [LARGE SCALE MRNA] (ISOFORMS 1 AND 2)</scope>
</reference>
<reference key="7">
    <citation type="journal article" date="2000" name="DNA Res.">
        <title>Prediction of the coding sequences of unidentified human genes. XVIII. The complete sequences of 100 new cDNA clones from brain which code for large proteins in vitro.</title>
        <authorList>
            <person name="Nagase T."/>
            <person name="Kikuno R."/>
            <person name="Nakayama M."/>
            <person name="Hirosawa M."/>
            <person name="Ohara O."/>
        </authorList>
    </citation>
    <scope>NUCLEOTIDE SEQUENCE [LARGE SCALE MRNA] OF 122-828 (ISOFORM 3)</scope>
    <source>
        <tissue>Brain</tissue>
    </source>
</reference>
<reference key="8">
    <citation type="journal article" date="2009" name="BMC Cell Biol.">
        <title>Hydrophobic profiles of the tail anchors in SLMAP dictate subcellular targeting.</title>
        <authorList>
            <person name="Byers J.T."/>
            <person name="Guzzo R.M."/>
            <person name="Salih M."/>
            <person name="Tuana B.S."/>
        </authorList>
    </citation>
    <scope>SUBCELLULAR LOCATION</scope>
    <scope>ALTERNATIVE SPLICING</scope>
    <scope>TRANSMEMBRANE DOMAIN</scope>
    <scope>MUTAGENESIS OF LYS-799; 808-ALA--ALA-815; 808-ALA-ALA-809 AND ARG-825</scope>
</reference>
<reference key="9">
    <citation type="journal article" date="2010" name="Sci. Signal.">
        <title>Quantitative phosphoproteomics reveals widespread full phosphorylation site occupancy during mitosis.</title>
        <authorList>
            <person name="Olsen J.V."/>
            <person name="Vermeulen M."/>
            <person name="Santamaria A."/>
            <person name="Kumar C."/>
            <person name="Miller M.L."/>
            <person name="Jensen L.J."/>
            <person name="Gnad F."/>
            <person name="Cox J."/>
            <person name="Jensen T.S."/>
            <person name="Nigg E.A."/>
            <person name="Brunak S."/>
            <person name="Mann M."/>
        </authorList>
    </citation>
    <scope>PHOSPHORYLATION [LARGE SCALE ANALYSIS] AT SER-452</scope>
    <scope>IDENTIFICATION BY MASS SPECTROMETRY [LARGE SCALE ANALYSIS]</scope>
    <source>
        <tissue>Cervix carcinoma</tissue>
    </source>
</reference>
<reference key="10">
    <citation type="journal article" date="2011" name="Sci. Signal.">
        <title>System-wide temporal characterization of the proteome and phosphoproteome of human embryonic stem cell differentiation.</title>
        <authorList>
            <person name="Rigbolt K.T."/>
            <person name="Prokhorova T.A."/>
            <person name="Akimov V."/>
            <person name="Henningsen J."/>
            <person name="Johansen P.T."/>
            <person name="Kratchmarova I."/>
            <person name="Kassem M."/>
            <person name="Mann M."/>
            <person name="Olsen J.V."/>
            <person name="Blagoev B."/>
        </authorList>
    </citation>
    <scope>PHOSPHORYLATION [LARGE SCALE ANALYSIS] AT SER-452</scope>
    <scope>IDENTIFICATION BY MASS SPECTROMETRY [LARGE SCALE ANALYSIS]</scope>
</reference>
<reference key="11">
    <citation type="journal article" date="2013" name="J. Proteome Res.">
        <title>Toward a comprehensive characterization of a human cancer cell phosphoproteome.</title>
        <authorList>
            <person name="Zhou H."/>
            <person name="Di Palma S."/>
            <person name="Preisinger C."/>
            <person name="Peng M."/>
            <person name="Polat A.N."/>
            <person name="Heck A.J."/>
            <person name="Mohammed S."/>
        </authorList>
    </citation>
    <scope>PHOSPHORYLATION [LARGE SCALE ANALYSIS] AT SER-148 AND SER-452</scope>
    <scope>IDENTIFICATION BY MASS SPECTROMETRY [LARGE SCALE ANALYSIS]</scope>
    <source>
        <tissue>Cervix carcinoma</tissue>
        <tissue>Erythroleukemia</tissue>
    </source>
</reference>
<reference key="12">
    <citation type="journal article" date="2015" name="Proteomics">
        <title>N-terminome analysis of the human mitochondrial proteome.</title>
        <authorList>
            <person name="Vaca Jacome A.S."/>
            <person name="Rabilloud T."/>
            <person name="Schaeffer-Reiss C."/>
            <person name="Rompais M."/>
            <person name="Ayoub D."/>
            <person name="Lane L."/>
            <person name="Bairoch A."/>
            <person name="Van Dorsselaer A."/>
            <person name="Carapito C."/>
        </authorList>
    </citation>
    <scope>IDENTIFICATION BY MASS SPECTROMETRY [LARGE SCALE ANALYSIS]</scope>
</reference>
<reference evidence="21 22" key="13">
    <citation type="journal article" date="2017" name="Elife">
        <title>SAV1 promotes Hippo kinase activation through antagonizing the PP2A phosphatase STRIPAK.</title>
        <authorList>
            <person name="Bae S.J."/>
            <person name="Ni L."/>
            <person name="Osinski A."/>
            <person name="Tomchick D.R."/>
            <person name="Brautigam C.A."/>
            <person name="Luo X."/>
        </authorList>
    </citation>
    <scope>X-RAY CRYSTALLOGRAPHY (1.08 ANGSTROMS) OF 1-140 IN COMPLEX WITH STK3</scope>
    <scope>INTERACTION WITH STK3</scope>
    <scope>FUNCTION</scope>
    <scope>ASSOCIATION WITH THE STRIPAK COMPLEX</scope>
</reference>
<reference evidence="20" key="14">
    <citation type="journal article" date="2019" name="Cell Discov.">
        <title>Architecture, substructures, and dynamic assembly of STRIPAK complexes in Hippo signaling.</title>
        <authorList>
            <person name="Tang Y."/>
            <person name="Chen M."/>
            <person name="Zhou L."/>
            <person name="Ma J."/>
            <person name="Li Y."/>
            <person name="Zhang H."/>
            <person name="Shi Z."/>
            <person name="Xu Q."/>
            <person name="Zhang X."/>
            <person name="Gao Z."/>
            <person name="Zhao Y."/>
            <person name="Cheng Y."/>
            <person name="Jiao S."/>
            <person name="Zhou Z."/>
        </authorList>
    </citation>
    <scope>X-RAY CRYSTALLOGRAPHY (2.30 ANGSTROMS) OF 167-226 IN COMPLEX WITH SIKE1</scope>
    <scope>SUBUNIT</scope>
    <scope>MUTAGENESIS OF LEU-182; LEU-186; LEU-189 AND LEU-193</scope>
</reference>
<keyword id="KW-0002">3D-structure</keyword>
<keyword id="KW-0025">Alternative splicing</keyword>
<keyword id="KW-1003">Cell membrane</keyword>
<keyword id="KW-0175">Coiled coil</keyword>
<keyword id="KW-0963">Cytoplasm</keyword>
<keyword id="KW-0206">Cytoskeleton</keyword>
<keyword id="KW-0256">Endoplasmic reticulum</keyword>
<keyword id="KW-0472">Membrane</keyword>
<keyword id="KW-0496">Mitochondrion</keyword>
<keyword id="KW-0597">Phosphoprotein</keyword>
<keyword id="KW-1267">Proteomics identification</keyword>
<keyword id="KW-1185">Reference proteome</keyword>
<keyword id="KW-0812">Transmembrane</keyword>
<keyword id="KW-1133">Transmembrane helix</keyword>